<gene>
    <name type="primary">COX1/2</name>
</gene>
<keyword id="KW-0106">Calcium</keyword>
<keyword id="KW-0186">Copper</keyword>
<keyword id="KW-0249">Electron transport</keyword>
<keyword id="KW-0349">Heme</keyword>
<keyword id="KW-0408">Iron</keyword>
<keyword id="KW-0460">Magnesium</keyword>
<keyword id="KW-0472">Membrane</keyword>
<keyword id="KW-0479">Metal-binding</keyword>
<keyword id="KW-0496">Mitochondrion</keyword>
<keyword id="KW-0999">Mitochondrion inner membrane</keyword>
<keyword id="KW-0679">Respiratory chain</keyword>
<keyword id="KW-1278">Translocase</keyword>
<keyword id="KW-0812">Transmembrane</keyword>
<keyword id="KW-1133">Transmembrane helix</keyword>
<keyword id="KW-0813">Transport</keyword>
<name>COX1_ACACA</name>
<feature type="chain" id="PRO_0000183275" description="Cytochrome c oxidase subunit 1+2">
    <location>
        <begin position="1"/>
        <end position="873"/>
    </location>
</feature>
<feature type="transmembrane region" description="Helical" evidence="3">
    <location>
        <begin position="29"/>
        <end position="49"/>
    </location>
</feature>
<feature type="transmembrane region" description="Helical" evidence="3">
    <location>
        <begin position="70"/>
        <end position="90"/>
    </location>
</feature>
<feature type="transmembrane region" description="Helical" evidence="3">
    <location>
        <begin position="91"/>
        <end position="111"/>
    </location>
</feature>
<feature type="transmembrane region" description="Helical" evidence="3">
    <location>
        <begin position="114"/>
        <end position="134"/>
    </location>
</feature>
<feature type="transmembrane region" description="Helical" evidence="3">
    <location>
        <begin position="159"/>
        <end position="179"/>
    </location>
</feature>
<feature type="transmembrane region" description="Helical" evidence="3">
    <location>
        <begin position="197"/>
        <end position="217"/>
    </location>
</feature>
<feature type="transmembrane region" description="Helical" evidence="3">
    <location>
        <begin position="248"/>
        <end position="268"/>
    </location>
</feature>
<feature type="transmembrane region" description="Helical" evidence="3">
    <location>
        <begin position="280"/>
        <end position="300"/>
    </location>
</feature>
<feature type="transmembrane region" description="Helical" evidence="3">
    <location>
        <begin position="323"/>
        <end position="343"/>
    </location>
</feature>
<feature type="transmembrane region" description="Helical" evidence="3">
    <location>
        <begin position="351"/>
        <end position="371"/>
    </location>
</feature>
<feature type="transmembrane region" description="Helical" evidence="3">
    <location>
        <begin position="390"/>
        <end position="410"/>
    </location>
</feature>
<feature type="transmembrane region" description="Helical" evidence="3">
    <location>
        <begin position="427"/>
        <end position="447"/>
    </location>
</feature>
<feature type="transmembrane region" description="Helical" evidence="3">
    <location>
        <begin position="469"/>
        <end position="489"/>
    </location>
</feature>
<feature type="transmembrane region" description="Helical" evidence="3">
    <location>
        <begin position="536"/>
        <end position="556"/>
    </location>
</feature>
<feature type="transmembrane region" description="Helical" evidence="3">
    <location>
        <begin position="585"/>
        <end position="605"/>
    </location>
</feature>
<feature type="transmembrane region" description="Helical" evidence="3">
    <location>
        <begin position="656"/>
        <end position="676"/>
    </location>
</feature>
<feature type="transmembrane region" description="Helical" evidence="3">
    <location>
        <begin position="845"/>
        <end position="865"/>
    </location>
</feature>
<feature type="region of interest" description="COX1">
    <location>
        <begin position="1"/>
        <end position="474"/>
    </location>
</feature>
<feature type="region of interest" description="COX2">
    <location>
        <begin position="475"/>
        <end position="843"/>
    </location>
</feature>
<feature type="binding site" evidence="2">
    <location>
        <position position="52"/>
    </location>
    <ligand>
        <name>Ca(2+)</name>
        <dbReference type="ChEBI" id="CHEBI:29108"/>
    </ligand>
</feature>
<feature type="binding site" evidence="2">
    <location>
        <position position="55"/>
    </location>
    <ligand>
        <name>Ca(2+)</name>
        <dbReference type="ChEBI" id="CHEBI:29108"/>
    </ligand>
</feature>
<feature type="binding site" evidence="2">
    <location>
        <position position="57"/>
    </location>
    <ligand>
        <name>Ca(2+)</name>
        <dbReference type="ChEBI" id="CHEBI:29108"/>
    </ligand>
</feature>
<feature type="binding site" description="axial binding residue" evidence="2">
    <location>
        <position position="75"/>
    </location>
    <ligand>
        <name>Fe(II)-heme a</name>
        <dbReference type="ChEBI" id="CHEBI:61715"/>
        <note>low-spin</note>
    </ligand>
    <ligandPart>
        <name>Fe</name>
        <dbReference type="ChEBI" id="CHEBI:18248"/>
    </ligandPart>
</feature>
<feature type="binding site" evidence="2">
    <location>
        <position position="254"/>
    </location>
    <ligand>
        <name>Cu cation</name>
        <dbReference type="ChEBI" id="CHEBI:23378"/>
        <label>B</label>
    </ligand>
</feature>
<feature type="binding site" evidence="1">
    <location>
        <position position="258"/>
    </location>
    <ligand>
        <name>O2</name>
        <dbReference type="ChEBI" id="CHEBI:15379"/>
    </ligand>
</feature>
<feature type="binding site" evidence="2">
    <location>
        <position position="303"/>
    </location>
    <ligand>
        <name>Cu cation</name>
        <dbReference type="ChEBI" id="CHEBI:23378"/>
        <label>B</label>
    </ligand>
</feature>
<feature type="binding site" evidence="2">
    <location>
        <position position="304"/>
    </location>
    <ligand>
        <name>Cu cation</name>
        <dbReference type="ChEBI" id="CHEBI:23378"/>
        <label>B</label>
    </ligand>
</feature>
<feature type="binding site" evidence="2">
    <location>
        <position position="381"/>
    </location>
    <ligand>
        <name>Mg(2+)</name>
        <dbReference type="ChEBI" id="CHEBI:18420"/>
        <note>ligand shared with subunit 2</note>
    </ligand>
</feature>
<feature type="binding site" evidence="2">
    <location>
        <position position="382"/>
    </location>
    <ligand>
        <name>Mg(2+)</name>
        <dbReference type="ChEBI" id="CHEBI:18420"/>
        <note>ligand shared with subunit 2</note>
    </ligand>
</feature>
<feature type="binding site" description="axial binding residue" evidence="2">
    <location>
        <position position="389"/>
    </location>
    <ligand>
        <name>heme a3</name>
        <dbReference type="ChEBI" id="CHEBI:83282"/>
        <note>high-spin</note>
    </ligand>
    <ligandPart>
        <name>Fe</name>
        <dbReference type="ChEBI" id="CHEBI:18248"/>
    </ligandPart>
</feature>
<feature type="binding site" description="axial binding residue" evidence="2">
    <location>
        <position position="391"/>
    </location>
    <ligand>
        <name>Fe(II)-heme a</name>
        <dbReference type="ChEBI" id="CHEBI:61715"/>
        <note>low-spin</note>
    </ligand>
    <ligandPart>
        <name>Fe</name>
        <dbReference type="ChEBI" id="CHEBI:18248"/>
    </ligandPart>
</feature>
<feature type="binding site" evidence="2">
    <location>
        <position position="454"/>
    </location>
    <ligand>
        <name>Ca(2+)</name>
        <dbReference type="ChEBI" id="CHEBI:29108"/>
    </ligand>
</feature>
<feature type="binding site" evidence="4">
    <location>
        <position position="801"/>
    </location>
    <ligand>
        <name>Cu cation</name>
        <dbReference type="ChEBI" id="CHEBI:23378"/>
        <label>A</label>
    </ligand>
</feature>
<feature type="binding site" evidence="4">
    <location>
        <position position="836"/>
    </location>
    <ligand>
        <name>Cu cation</name>
        <dbReference type="ChEBI" id="CHEBI:23378"/>
        <label>A</label>
    </ligand>
</feature>
<feature type="binding site" evidence="4">
    <location>
        <position position="840"/>
    </location>
    <ligand>
        <name>Cu cation</name>
        <dbReference type="ChEBI" id="CHEBI:23378"/>
        <label>A</label>
    </ligand>
</feature>
<feature type="binding site" evidence="4">
    <location>
        <position position="844"/>
    </location>
    <ligand>
        <name>Cu cation</name>
        <dbReference type="ChEBI" id="CHEBI:23378"/>
        <label>A</label>
    </ligand>
</feature>
<feature type="cross-link" description="1'-histidyl-3'-tyrosine (His-Tyr)" evidence="2">
    <location>
        <begin position="254"/>
        <end position="258"/>
    </location>
</feature>
<proteinExistence type="inferred from homology"/>
<protein>
    <recommendedName>
        <fullName>Cytochrome c oxidase subunit 1+2</fullName>
        <ecNumber>7.1.1.9</ecNumber>
    </recommendedName>
    <alternativeName>
        <fullName>Cytochrome c oxidase polypeptide I+II</fullName>
    </alternativeName>
</protein>
<accession>Q37370</accession>
<evidence type="ECO:0000250" key="1">
    <source>
        <dbReference type="UniProtKB" id="P00396"/>
    </source>
</evidence>
<evidence type="ECO:0000250" key="2">
    <source>
        <dbReference type="UniProtKB" id="P00401"/>
    </source>
</evidence>
<evidence type="ECO:0000255" key="3"/>
<evidence type="ECO:0000305" key="4"/>
<comment type="function">
    <text evidence="2">Component of the cytochrome c oxidase, the last enzyme in the mitochondrial electron transport chain which drives oxidative phosphorylation. The respiratory chain contains 3 multisubunit complexes succinate dehydrogenase (complex II, CII), ubiquinol-cytochrome c oxidoreductase (cytochrome b-c1 complex, complex III, CIII) and cytochrome c oxidase (complex IV, CIV), that cooperate to transfer electrons derived from NADH and succinate to molecular oxygen, creating an electrochemical gradient over the inner membrane that drives transmembrane transport and the ATP synthase. Cytochrome c oxidase is the component of the respiratory chain that catalyzes the reduction of oxygen to water. Electrons originating from reduced cytochrome c in the intermembrane space (IMS) are transferred via the dinuclear copper A center (CU(A)) of subunit 2 and heme A of subunit 1 to the active site in subunit 1, a binuclear center (BNC) formed by heme A3 and copper B (CU(B)). The BNC reduces molecular oxygen to 2 water molecules using 4 electrons from cytochrome c in the IMS and 4 protons from the mitochondrial matrix.</text>
</comment>
<comment type="catalytic activity">
    <reaction evidence="2">
        <text>4 Fe(II)-[cytochrome c] + O2 + 8 H(+)(in) = 4 Fe(III)-[cytochrome c] + 2 H2O + 4 H(+)(out)</text>
        <dbReference type="Rhea" id="RHEA:11436"/>
        <dbReference type="Rhea" id="RHEA-COMP:10350"/>
        <dbReference type="Rhea" id="RHEA-COMP:14399"/>
        <dbReference type="ChEBI" id="CHEBI:15377"/>
        <dbReference type="ChEBI" id="CHEBI:15378"/>
        <dbReference type="ChEBI" id="CHEBI:15379"/>
        <dbReference type="ChEBI" id="CHEBI:29033"/>
        <dbReference type="ChEBI" id="CHEBI:29034"/>
        <dbReference type="EC" id="7.1.1.9"/>
    </reaction>
    <physiologicalReaction direction="left-to-right" evidence="2">
        <dbReference type="Rhea" id="RHEA:11437"/>
    </physiologicalReaction>
</comment>
<comment type="cofactor">
    <cofactor evidence="2">
        <name>heme</name>
        <dbReference type="ChEBI" id="CHEBI:30413"/>
    </cofactor>
    <text evidence="2">Binds 2 heme A groups non-covalently per subunit.</text>
</comment>
<comment type="cofactor">
    <cofactor evidence="2">
        <name>Cu cation</name>
        <dbReference type="ChEBI" id="CHEBI:23378"/>
    </cofactor>
    <text evidence="2">Binds a copper B center.</text>
</comment>
<comment type="pathway">
    <text evidence="2">Energy metabolism; oxidative phosphorylation.</text>
</comment>
<comment type="subunit">
    <text evidence="2">Component of the cytochrome c oxidase (complex IV, CIV), a multisubunit enzyme composed of a catalytic core of 3 subunits and several supernumerary subunits. The complex exists as a monomer or a dimer and forms supercomplexes (SCs) in the inner mitochondrial membrane with ubiquinol-cytochrome c oxidoreductase (cytochrome b-c1 complex, complex III, CIII).</text>
</comment>
<comment type="subcellular location">
    <subcellularLocation>
        <location evidence="2">Mitochondrion inner membrane</location>
        <topology evidence="2">Multi-pass membrane protein</topology>
    </subcellularLocation>
</comment>
<comment type="similarity">
    <text evidence="4">In the N-terminal section; belongs to the heme-copper respiratory oxidase family.</text>
</comment>
<comment type="similarity">
    <text evidence="4">In the C-terminal section; belongs to the cytochrome c oxidase subunit 2 family.</text>
</comment>
<sequence length="873" mass="99214">MINRLLNNLTSFFTDNRWLFSTNHKDIGTLYLIFGGFSGIIGTIFSMIIRLELAAPGSQILSGNSQLYNVIITAHAFVMIFFFVMPVMIGGFGNWFVPLMIGAPDMAFPRLNNISFWLLPPSLFLLLCSSLVEFGAGTGWTVYPPLSSIVAHSGGSVDLAIFSLHLAGISSLLGAINFITTIFNMRVPGLSMHKLPLFVWSVLITAFLLLFSLPVLAGAITMLLTDRNFNTSFFDPSGGGDPILYQHLFWFFGHPEVYILILPAFGIVSQIIGTFSNKSIFGYIGMVYAMLSIAVLGFIVWAHHMYTVGLDVDTRAYFTAATMMIAVPTGIKIFSWIATLWGGQIVRKTPLLFVIGFLILFTLGGLTGIVLSNAGLDIMLHDTYYVVAHFHYVLSMGAVFAFFAGFYYWFWKISGYTYNEMYGNVHFWLMFIGVNLTFFPMHFVGLAGMPRRIPDYPDNYYYWNILSSFGSIISSVSVIVFFYLIYLAFNNNNTPKLIKLVHSIFAPYINTLSKNLLTFASIKSTSDSSFFKFSKFFIFFMVSLSVLFIFYDSLLCLNDHTNSWKIGFQDPTTPIAYGIIKLHDHILFFLAVILFVVGYLLLSTYKKFYYGSLNNDLPESKRISLFDTLINTYKENLSFNVTNRTYNINHGTTIEIIWTILPAFILLFIAVPSFALLYAMDEIIDPVLTVKVIGHQWYWSYEYSDYSVVYSNRMLDYDSIDRFAAMEMMYKGMGYLKDRSLLSYLYIPMVIPETTIKFDSYMIHEAELNLGDLRLLKTDMPLFLPKNTHIRLLITSSDVLHSWAVPSFGVKVDAVPGRLNQTSLYLKNTGTFYGQCSELCGVNHAFMPIEVYVVNPVYFYNYVYIYFKNFNLI</sequence>
<reference key="1">
    <citation type="journal article" date="1995" name="J. Mol. Biol.">
        <title>The mitochondrial DNA of the amoeboid protozoon, Acanthamoeba castellanii: complete sequence, gene content and genome organization.</title>
        <authorList>
            <person name="Burger G."/>
            <person name="Plante I."/>
            <person name="Lonergan K.M."/>
            <person name="Gray M.W."/>
        </authorList>
    </citation>
    <scope>NUCLEOTIDE SEQUENCE [GENOMIC DNA]</scope>
    <source>
        <strain>ATCC 30010 / Neff</strain>
    </source>
</reference>
<reference key="2">
    <citation type="journal article" date="1996" name="J. Mol. Biol.">
        <title>Expression of a continuous open reading frame encoding subunits 1 and 2 of cytochrome c oxidase in the mitochondrial DNA of Acanthamoeba castellanii.</title>
        <authorList>
            <person name="Lonergan K.M."/>
            <person name="Gray M.W."/>
        </authorList>
    </citation>
    <scope>NUCLEOTIDE SEQUENCE [GENOMIC DNA]</scope>
</reference>
<organism>
    <name type="scientific">Acanthamoeba castellanii</name>
    <name type="common">Amoeba</name>
    <dbReference type="NCBI Taxonomy" id="5755"/>
    <lineage>
        <taxon>Eukaryota</taxon>
        <taxon>Amoebozoa</taxon>
        <taxon>Discosea</taxon>
        <taxon>Longamoebia</taxon>
        <taxon>Centramoebida</taxon>
        <taxon>Acanthamoebidae</taxon>
        <taxon>Acanthamoeba</taxon>
    </lineage>
</organism>
<geneLocation type="mitochondrion"/>
<dbReference type="EC" id="7.1.1.9"/>
<dbReference type="EMBL" id="U12386">
    <property type="protein sequence ID" value="AAD11820.1"/>
    <property type="molecule type" value="Genomic_DNA"/>
</dbReference>
<dbReference type="PIR" id="S53828">
    <property type="entry name" value="S53828"/>
</dbReference>
<dbReference type="RefSeq" id="NP_042527.1">
    <property type="nucleotide sequence ID" value="NC_001637.1"/>
</dbReference>
<dbReference type="SMR" id="Q37370"/>
<dbReference type="GeneID" id="1734020"/>
<dbReference type="UniPathway" id="UPA00705"/>
<dbReference type="GO" id="GO:0005743">
    <property type="term" value="C:mitochondrial inner membrane"/>
    <property type="evidence" value="ECO:0007669"/>
    <property type="project" value="UniProtKB-SubCell"/>
</dbReference>
<dbReference type="GO" id="GO:0045277">
    <property type="term" value="C:respiratory chain complex IV"/>
    <property type="evidence" value="ECO:0007669"/>
    <property type="project" value="InterPro"/>
</dbReference>
<dbReference type="GO" id="GO:0005507">
    <property type="term" value="F:copper ion binding"/>
    <property type="evidence" value="ECO:0007669"/>
    <property type="project" value="InterPro"/>
</dbReference>
<dbReference type="GO" id="GO:0004129">
    <property type="term" value="F:cytochrome-c oxidase activity"/>
    <property type="evidence" value="ECO:0007669"/>
    <property type="project" value="UniProtKB-EC"/>
</dbReference>
<dbReference type="GO" id="GO:0020037">
    <property type="term" value="F:heme binding"/>
    <property type="evidence" value="ECO:0007669"/>
    <property type="project" value="InterPro"/>
</dbReference>
<dbReference type="GO" id="GO:0015990">
    <property type="term" value="P:electron transport coupled proton transport"/>
    <property type="evidence" value="ECO:0007669"/>
    <property type="project" value="TreeGrafter"/>
</dbReference>
<dbReference type="GO" id="GO:0006123">
    <property type="term" value="P:mitochondrial electron transport, cytochrome c to oxygen"/>
    <property type="evidence" value="ECO:0007669"/>
    <property type="project" value="TreeGrafter"/>
</dbReference>
<dbReference type="CDD" id="cd13912">
    <property type="entry name" value="CcO_II_C"/>
    <property type="match status" value="1"/>
</dbReference>
<dbReference type="CDD" id="cd01663">
    <property type="entry name" value="Cyt_c_Oxidase_I"/>
    <property type="match status" value="1"/>
</dbReference>
<dbReference type="FunFam" id="1.20.210.10:FF:000001">
    <property type="entry name" value="Cytochrome c oxidase subunit 1"/>
    <property type="match status" value="1"/>
</dbReference>
<dbReference type="Gene3D" id="1.10.287.90">
    <property type="match status" value="1"/>
</dbReference>
<dbReference type="Gene3D" id="2.60.40.420">
    <property type="entry name" value="Cupredoxins - blue copper proteins"/>
    <property type="match status" value="1"/>
</dbReference>
<dbReference type="Gene3D" id="1.20.210.10">
    <property type="entry name" value="Cytochrome c oxidase-like, subunit I domain"/>
    <property type="match status" value="1"/>
</dbReference>
<dbReference type="InterPro" id="IPR002429">
    <property type="entry name" value="CcO_II-like_C"/>
</dbReference>
<dbReference type="InterPro" id="IPR034210">
    <property type="entry name" value="CcO_II_C"/>
</dbReference>
<dbReference type="InterPro" id="IPR001505">
    <property type="entry name" value="Copper_CuA"/>
</dbReference>
<dbReference type="InterPro" id="IPR008972">
    <property type="entry name" value="Cupredoxin"/>
</dbReference>
<dbReference type="InterPro" id="IPR023616">
    <property type="entry name" value="Cyt_c_oxase-like_su1_dom"/>
</dbReference>
<dbReference type="InterPro" id="IPR036927">
    <property type="entry name" value="Cyt_c_oxase-like_su1_sf"/>
</dbReference>
<dbReference type="InterPro" id="IPR000883">
    <property type="entry name" value="Cyt_C_Oxase_1"/>
</dbReference>
<dbReference type="InterPro" id="IPR023615">
    <property type="entry name" value="Cyt_c_Oxase_su1_BS"/>
</dbReference>
<dbReference type="InterPro" id="IPR033944">
    <property type="entry name" value="Cyt_c_oxase_su1_dom"/>
</dbReference>
<dbReference type="InterPro" id="IPR014222">
    <property type="entry name" value="Cyt_c_oxidase_su2"/>
</dbReference>
<dbReference type="InterPro" id="IPR011759">
    <property type="entry name" value="Cyt_c_oxidase_su2_TM_dom"/>
</dbReference>
<dbReference type="InterPro" id="IPR036257">
    <property type="entry name" value="Cyt_c_oxidase_su2_TM_sf"/>
</dbReference>
<dbReference type="NCBIfam" id="TIGR02866">
    <property type="entry name" value="CoxB"/>
    <property type="match status" value="1"/>
</dbReference>
<dbReference type="PANTHER" id="PTHR10422">
    <property type="entry name" value="CYTOCHROME C OXIDASE SUBUNIT 1"/>
    <property type="match status" value="1"/>
</dbReference>
<dbReference type="PANTHER" id="PTHR10422:SF18">
    <property type="entry name" value="CYTOCHROME C OXIDASE SUBUNIT 1"/>
    <property type="match status" value="1"/>
</dbReference>
<dbReference type="Pfam" id="PF00115">
    <property type="entry name" value="COX1"/>
    <property type="match status" value="1"/>
</dbReference>
<dbReference type="Pfam" id="PF00116">
    <property type="entry name" value="COX2"/>
    <property type="match status" value="2"/>
</dbReference>
<dbReference type="Pfam" id="PF02790">
    <property type="entry name" value="COX2_TM"/>
    <property type="match status" value="2"/>
</dbReference>
<dbReference type="PRINTS" id="PR01165">
    <property type="entry name" value="CYCOXIDASEI"/>
</dbReference>
<dbReference type="SUPFAM" id="SSF49503">
    <property type="entry name" value="Cupredoxins"/>
    <property type="match status" value="1"/>
</dbReference>
<dbReference type="SUPFAM" id="SSF81442">
    <property type="entry name" value="Cytochrome c oxidase subunit I-like"/>
    <property type="match status" value="1"/>
</dbReference>
<dbReference type="SUPFAM" id="SSF81464">
    <property type="entry name" value="Cytochrome c oxidase subunit II-like, transmembrane region"/>
    <property type="match status" value="1"/>
</dbReference>
<dbReference type="PROSITE" id="PS50855">
    <property type="entry name" value="COX1"/>
    <property type="match status" value="1"/>
</dbReference>
<dbReference type="PROSITE" id="PS00077">
    <property type="entry name" value="COX1_CUB"/>
    <property type="match status" value="1"/>
</dbReference>
<dbReference type="PROSITE" id="PS00078">
    <property type="entry name" value="COX2"/>
    <property type="match status" value="1"/>
</dbReference>
<dbReference type="PROSITE" id="PS50857">
    <property type="entry name" value="COX2_CUA"/>
    <property type="match status" value="1"/>
</dbReference>
<dbReference type="PROSITE" id="PS50999">
    <property type="entry name" value="COX2_TM"/>
    <property type="match status" value="1"/>
</dbReference>